<protein>
    <recommendedName>
        <fullName>Myelin basic protein</fullName>
        <shortName>MBP</shortName>
    </recommendedName>
    <alternativeName>
        <fullName>Myelin A1 protein</fullName>
    </alternativeName>
</protein>
<proteinExistence type="evidence at protein level"/>
<feature type="chain" id="PRO_0000158991" description="Myelin basic protein">
    <location>
        <begin position="1"/>
        <end position="250"/>
    </location>
</feature>
<feature type="region of interest" description="Disordered" evidence="5">
    <location>
        <begin position="1"/>
        <end position="150"/>
    </location>
</feature>
<feature type="region of interest" description="Disordered" evidence="5">
    <location>
        <begin position="175"/>
        <end position="250"/>
    </location>
</feature>
<feature type="compositionally biased region" description="Basic and acidic residues" evidence="5">
    <location>
        <begin position="1"/>
        <end position="28"/>
    </location>
</feature>
<feature type="compositionally biased region" description="Basic and acidic residues" evidence="5">
    <location>
        <begin position="95"/>
        <end position="113"/>
    </location>
</feature>
<feature type="compositionally biased region" description="Polar residues" evidence="5">
    <location>
        <begin position="197"/>
        <end position="206"/>
    </location>
</feature>
<feature type="site" description="Cleavage; by CTSG" evidence="2">
    <location>
        <begin position="221"/>
        <end position="222"/>
    </location>
</feature>
<feature type="modified residue" description="Phosphoserine" evidence="18">
    <location>
        <position position="31"/>
    </location>
</feature>
<feature type="modified residue" description="Phosphoserine" evidence="18">
    <location>
        <position position="40"/>
    </location>
</feature>
<feature type="modified residue" description="Phosphoserine" evidence="3">
    <location>
        <position position="141"/>
    </location>
</feature>
<feature type="modified residue" description="Phosphoserine" evidence="18">
    <location>
        <position position="144"/>
    </location>
</feature>
<feature type="modified residue" description="Phosphotyrosine" evidence="4">
    <location>
        <position position="146"/>
    </location>
</feature>
<feature type="modified residue" description="Phosphothreonine" evidence="4">
    <location>
        <position position="149"/>
    </location>
</feature>
<feature type="modified residue" description="Phosphoserine" evidence="18">
    <location>
        <position position="151"/>
    </location>
</feature>
<feature type="modified residue" description="Phosphothreonine" evidence="4">
    <location>
        <position position="152"/>
    </location>
</feature>
<feature type="modified residue" description="Citrulline" evidence="1">
    <location>
        <position position="157"/>
    </location>
</feature>
<feature type="modified residue" description="Citrulline" evidence="1">
    <location>
        <position position="163"/>
    </location>
</feature>
<feature type="modified residue" description="Phosphothreonine" evidence="16 18">
    <location>
        <position position="167"/>
    </location>
</feature>
<feature type="modified residue" description="Phosphoserine" evidence="15 18">
    <location>
        <position position="172"/>
    </location>
</feature>
<feature type="modified residue" description="Omega-N-methylarginine" evidence="19">
    <location>
        <position position="175"/>
    </location>
</feature>
<feature type="modified residue" description="Omega-N-methylarginine" evidence="19">
    <location>
        <position position="181"/>
    </location>
</feature>
<feature type="modified residue" description="Phosphoserine" evidence="3">
    <location>
        <position position="188"/>
    </location>
</feature>
<feature type="modified residue" description="Phosphothreonine" evidence="18">
    <location>
        <position position="197"/>
    </location>
</feature>
<feature type="modified residue" description="Phosphotyrosine" evidence="17">
    <location>
        <position position="199"/>
    </location>
</feature>
<feature type="modified residue" description="Phosphoserine" evidence="18">
    <location>
        <position position="206"/>
    </location>
</feature>
<feature type="modified residue" description="Phosphothreonine" evidence="18">
    <location>
        <position position="211"/>
    </location>
</feature>
<feature type="modified residue" description="Phosphothreonine" evidence="4">
    <location>
        <position position="226"/>
    </location>
</feature>
<feature type="modified residue" description="Phosphothreonine" evidence="16 18">
    <location>
        <position position="229"/>
    </location>
</feature>
<feature type="modified residue" description="Deamidated glutamine" evidence="1">
    <location>
        <position position="234"/>
    </location>
</feature>
<feature type="modified residue" description="Citrulline" evidence="1">
    <location>
        <position position="239"/>
    </location>
</feature>
<feature type="modified residue" description="Phosphoserine" evidence="3">
    <location>
        <position position="241"/>
    </location>
</feature>
<feature type="modified residue" description="Phosphoserine; by UHMK1" evidence="3">
    <location>
        <position position="245"/>
    </location>
</feature>
<feature type="modified residue" description="Citrulline" evidence="1">
    <location>
        <position position="250"/>
    </location>
</feature>
<feature type="splice variant" id="VSP_003312" description="In isoform 4, isoform 5, isoform 6, isoform 7, isoform 8, isoform 9, isoform 10, isoform 11, isoform 12 and isoform 13." evidence="9 10 11 12">
    <location>
        <begin position="1"/>
        <end position="133"/>
    </location>
</feature>
<feature type="splice variant" id="VSP_003313" description="In isoform 3." evidence="13">
    <original>EADAIQNNGTSAEDTAVTDSKHTADPKNNWQGAHPADPGNRPHLIRLFSRDAPGREDNTFKDRPSESDELQTIQEDPTAASGGLDVMASQKRPSQRSKYLATASTMDHARHGFLPRHRDTGILDSIGRFFSGDRGAPKRGSGKDSHTRTTHYGSLPQKSQHGRTQDENPVVHFFKNIVTPRTPPPSQGKGGRDSRSGSPMARR</original>
    <variation>LTHENYPLWLPAPEVAARPDPR</variation>
    <location>
        <begin position="48"/>
        <end position="250"/>
    </location>
</feature>
<feature type="splice variant" id="VSP_003315" description="In isoform 4, isoform 6, isoform 9, isoform 11 and isoform 12." evidence="9 12">
    <original>K</original>
    <variation>KVPWLKQSRSPLPSHARSRPGLCHMYK</variation>
    <location>
        <position position="190"/>
    </location>
</feature>
<feature type="splice variant" id="VSP_003314" description="In isoform 2." evidence="8 13">
    <original>DSHTRTTHYGSLPQKSQHGRTQDENPVVHFFKNIVTPRTPPPSQGKGGRDSRSGSPMARR</original>
    <variation>VSSEP</variation>
    <location>
        <begin position="191"/>
        <end position="250"/>
    </location>
</feature>
<feature type="splice variant" id="VSP_003317" description="In isoform 10." evidence="14">
    <original>K</original>
    <variation>KDFVPGDHHVNVSVVTVSFSSSQGRGLSLSRFSWGAEGQKPGFGYGGRASDYKSAHKGFKGAYDAQGTLSKIFKL</variation>
    <location>
        <position position="236"/>
    </location>
</feature>
<feature type="splice variant" id="VSP_003316" description="In isoform 11." evidence="14">
    <original>K</original>
    <variation>KDFVPGDHHVNVSVVTVSFSSSQGRGLSLSRFSW</variation>
    <location>
        <position position="236"/>
    </location>
</feature>
<feature type="splice variant" id="VSP_003319" description="In isoform 4 and isoform 5." evidence="14">
    <original>K</original>
    <variation>KGRGLSLSRFSWGAEGQKPGFGYGGRASDYKSAHKGFKGAYDAQGTLSKIFKL</variation>
    <location>
        <position position="236"/>
    </location>
</feature>
<feature type="splice variant" id="VSP_003318" description="In isoform 6 and isoform 8." evidence="10 11 12">
    <original>K</original>
    <variation>KGRGLSLSRFSW</variation>
    <location>
        <position position="236"/>
    </location>
</feature>
<feature type="splice variant" id="VSP_003320" description="In isoform 7 and isoform 9." evidence="9 12">
    <original>K</original>
    <variation>KGAEGQKPGFGYGGRASDYKSAHKGFKGAYDAQGTLSKIFKL</variation>
    <location>
        <position position="236"/>
    </location>
</feature>
<feature type="sequence conflict" description="In Ref. 15." evidence="14" ref="15">
    <original>QK</original>
    <variation>HN</variation>
    <location>
        <begin position="204"/>
        <end position="205"/>
    </location>
</feature>
<feature type="strand" evidence="20">
    <location>
        <begin position="209"/>
        <end position="211"/>
    </location>
</feature>
<feature type="helix" evidence="20">
    <location>
        <begin position="216"/>
        <end position="225"/>
    </location>
</feature>
<feature type="initiator methionine" description="Removed" evidence="2">
    <location sequence="P04370-4">
        <position position="1"/>
    </location>
</feature>
<feature type="modified residue" description="N-acetylalanine" evidence="2">
    <location sequence="P04370-4">
        <position position="2"/>
    </location>
</feature>
<feature type="modified residue" description="Phosphothreonine" evidence="16">
    <location sequence="P04370-4">
        <position position="122"/>
    </location>
</feature>
<feature type="modified residue" description="Phosphoserine" evidence="16">
    <location sequence="P04370-4">
        <position position="139"/>
    </location>
</feature>
<feature type="modified residue" description="Phosphotyrosine" evidence="17">
    <location sequence="P04370-4">
        <position position="151"/>
    </location>
</feature>
<feature type="initiator methionine" description="Removed" evidence="2">
    <location sequence="P04370-5">
        <position position="1"/>
    </location>
</feature>
<feature type="modified residue" description="N-acetylalanine" evidence="2">
    <location sequence="P04370-5">
        <position position="2"/>
    </location>
</feature>
<feature type="modified residue" description="Phosphothreonine" evidence="16">
    <location sequence="P04370-5">
        <position position="96"/>
    </location>
</feature>
<feature type="modified residue" description="Phosphoserine" evidence="16">
    <location sequence="P04370-5">
        <position position="113"/>
    </location>
</feature>
<feature type="modified residue" description="Phosphotyrosine" evidence="17">
    <location sequence="P04370-5">
        <position position="125"/>
    </location>
</feature>
<feature type="initiator methionine" description="Removed" evidence="2">
    <location sequence="P04370-6">
        <position position="1"/>
    </location>
</feature>
<feature type="modified residue" description="N-acetylalanine" evidence="2">
    <location sequence="P04370-6">
        <position position="2"/>
    </location>
</feature>
<feature type="modified residue" description="Phosphothreonine" evidence="16">
    <location sequence="P04370-6">
        <position position="122"/>
    </location>
</feature>
<feature type="initiator methionine" description="Removed" evidence="14">
    <location sequence="P04370-7">
        <position position="1"/>
    </location>
</feature>
<feature type="modified residue" description="N-acetylalanine" evidence="14">
    <location sequence="P04370-7">
        <position position="2"/>
    </location>
</feature>
<feature type="initiator methionine" description="Removed" evidence="2">
    <location sequence="P04370-8">
        <position position="1"/>
    </location>
</feature>
<feature type="modified residue" description="N-acetylalanine" evidence="2">
    <location sequence="P04370-8">
        <position position="2"/>
    </location>
</feature>
<feature type="modified residue" description="Phosphothreonine" evidence="16">
    <location sequence="P04370-8">
        <position position="96"/>
    </location>
</feature>
<feature type="initiator methionine" description="Removed" evidence="14">
    <location sequence="P04370-9">
        <position position="1"/>
    </location>
</feature>
<feature type="modified residue" description="N-acetylalanine" evidence="14">
    <location sequence="P04370-9">
        <position position="2"/>
    </location>
</feature>
<feature type="modified residue" description="Phosphoserine" evidence="16">
    <location sequence="P04370-10">
        <position position="135"/>
    </location>
</feature>
<feature type="modified residue" description="Phosphotyrosine" evidence="17">
    <location sequence="P04370-10">
        <position position="147"/>
    </location>
</feature>
<sequence length="250" mass="27168">MGNHSGKRELSAEKASKDGEIHRGEAGKKRSVGKLSQTASEDSDVFGEADAIQNNGTSAEDTAVTDSKHTADPKNNWQGAHPADPGNRPHLIRLFSRDAPGREDNTFKDRPSESDELQTIQEDPTAASGGLDVMASQKRPSQRSKYLATASTMDHARHGFLPRHRDTGILDSIGRFFSGDRGAPKRGSGKDSHTRTTHYGSLPQKSQHGRTQDENPVVHFFKNIVTPRTPPPSQGKGGRDSRSGSPMARR</sequence>
<dbReference type="EMBL" id="M11533">
    <property type="protein sequence ID" value="AAA39496.1"/>
    <property type="molecule type" value="Genomic_DNA"/>
</dbReference>
<dbReference type="EMBL" id="M11291">
    <property type="protein sequence ID" value="AAA39496.1"/>
    <property type="status" value="JOINED"/>
    <property type="molecule type" value="Genomic_DNA"/>
</dbReference>
<dbReference type="EMBL" id="M11529">
    <property type="protein sequence ID" value="AAA39496.1"/>
    <property type="status" value="JOINED"/>
    <property type="molecule type" value="Genomic_DNA"/>
</dbReference>
<dbReference type="EMBL" id="M11530">
    <property type="protein sequence ID" value="AAA39496.1"/>
    <property type="status" value="JOINED"/>
    <property type="molecule type" value="Genomic_DNA"/>
</dbReference>
<dbReference type="EMBL" id="M11531">
    <property type="protein sequence ID" value="AAA39496.1"/>
    <property type="status" value="JOINED"/>
    <property type="molecule type" value="Genomic_DNA"/>
</dbReference>
<dbReference type="EMBL" id="M11532">
    <property type="protein sequence ID" value="AAA39496.1"/>
    <property type="status" value="JOINED"/>
    <property type="molecule type" value="Genomic_DNA"/>
</dbReference>
<dbReference type="EMBL" id="M11533">
    <property type="protein sequence ID" value="AAA39497.1"/>
    <property type="molecule type" value="Genomic_DNA"/>
</dbReference>
<dbReference type="EMBL" id="M11291">
    <property type="protein sequence ID" value="AAA39497.1"/>
    <property type="status" value="JOINED"/>
    <property type="molecule type" value="Genomic_DNA"/>
</dbReference>
<dbReference type="EMBL" id="M11529">
    <property type="protein sequence ID" value="AAA39497.1"/>
    <property type="status" value="JOINED"/>
    <property type="molecule type" value="Genomic_DNA"/>
</dbReference>
<dbReference type="EMBL" id="M11530">
    <property type="protein sequence ID" value="AAA39497.1"/>
    <property type="status" value="JOINED"/>
    <property type="molecule type" value="Genomic_DNA"/>
</dbReference>
<dbReference type="EMBL" id="M11531">
    <property type="protein sequence ID" value="AAA39497.1"/>
    <property type="status" value="JOINED"/>
    <property type="molecule type" value="Genomic_DNA"/>
</dbReference>
<dbReference type="EMBL" id="L00404">
    <property type="protein sequence ID" value="AAA39499.1"/>
    <property type="molecule type" value="Genomic_DNA"/>
</dbReference>
<dbReference type="EMBL" id="L00398">
    <property type="protein sequence ID" value="AAA39499.1"/>
    <property type="status" value="JOINED"/>
    <property type="molecule type" value="Genomic_DNA"/>
</dbReference>
<dbReference type="EMBL" id="L00400">
    <property type="protein sequence ID" value="AAA39499.1"/>
    <property type="status" value="JOINED"/>
    <property type="molecule type" value="Genomic_DNA"/>
</dbReference>
<dbReference type="EMBL" id="L00401">
    <property type="protein sequence ID" value="AAA39499.1"/>
    <property type="status" value="JOINED"/>
    <property type="molecule type" value="Genomic_DNA"/>
</dbReference>
<dbReference type="EMBL" id="L00402">
    <property type="protein sequence ID" value="AAA39499.1"/>
    <property type="status" value="JOINED"/>
    <property type="molecule type" value="Genomic_DNA"/>
</dbReference>
<dbReference type="EMBL" id="L00404">
    <property type="protein sequence ID" value="AAA39500.1"/>
    <property type="molecule type" value="Genomic_DNA"/>
</dbReference>
<dbReference type="EMBL" id="L00398">
    <property type="protein sequence ID" value="AAA39500.1"/>
    <property type="status" value="JOINED"/>
    <property type="molecule type" value="Genomic_DNA"/>
</dbReference>
<dbReference type="EMBL" id="L00399">
    <property type="protein sequence ID" value="AAA39500.1"/>
    <property type="status" value="JOINED"/>
    <property type="molecule type" value="Genomic_DNA"/>
</dbReference>
<dbReference type="EMBL" id="L00400">
    <property type="protein sequence ID" value="AAA39500.1"/>
    <property type="status" value="JOINED"/>
    <property type="molecule type" value="Genomic_DNA"/>
</dbReference>
<dbReference type="EMBL" id="L00401">
    <property type="protein sequence ID" value="AAA39500.1"/>
    <property type="status" value="JOINED"/>
    <property type="molecule type" value="Genomic_DNA"/>
</dbReference>
<dbReference type="EMBL" id="L00402">
    <property type="protein sequence ID" value="AAA39500.1"/>
    <property type="status" value="JOINED"/>
    <property type="molecule type" value="Genomic_DNA"/>
</dbReference>
<dbReference type="EMBL" id="L00404">
    <property type="protein sequence ID" value="AAA39501.1"/>
    <property type="molecule type" value="Genomic_DNA"/>
</dbReference>
<dbReference type="EMBL" id="L00398">
    <property type="protein sequence ID" value="AAA39501.1"/>
    <property type="status" value="JOINED"/>
    <property type="molecule type" value="Genomic_DNA"/>
</dbReference>
<dbReference type="EMBL" id="L00400">
    <property type="protein sequence ID" value="AAA39501.1"/>
    <property type="status" value="JOINED"/>
    <property type="molecule type" value="Genomic_DNA"/>
</dbReference>
<dbReference type="EMBL" id="L00401">
    <property type="protein sequence ID" value="AAA39501.1"/>
    <property type="status" value="JOINED"/>
    <property type="molecule type" value="Genomic_DNA"/>
</dbReference>
<dbReference type="EMBL" id="L00402">
    <property type="protein sequence ID" value="AAA39501.1"/>
    <property type="status" value="JOINED"/>
    <property type="molecule type" value="Genomic_DNA"/>
</dbReference>
<dbReference type="EMBL" id="L00403">
    <property type="protein sequence ID" value="AAA39501.1"/>
    <property type="status" value="JOINED"/>
    <property type="molecule type" value="Genomic_DNA"/>
</dbReference>
<dbReference type="EMBL" id="L00404">
    <property type="protein sequence ID" value="AAA39502.1"/>
    <property type="molecule type" value="Genomic_DNA"/>
</dbReference>
<dbReference type="EMBL" id="L00398">
    <property type="protein sequence ID" value="AAA39502.1"/>
    <property type="status" value="JOINED"/>
    <property type="molecule type" value="Genomic_DNA"/>
</dbReference>
<dbReference type="EMBL" id="L00399">
    <property type="protein sequence ID" value="AAA39502.1"/>
    <property type="status" value="JOINED"/>
    <property type="molecule type" value="Genomic_DNA"/>
</dbReference>
<dbReference type="EMBL" id="L00400">
    <property type="protein sequence ID" value="AAA39502.1"/>
    <property type="status" value="JOINED"/>
    <property type="molecule type" value="Genomic_DNA"/>
</dbReference>
<dbReference type="EMBL" id="L00401">
    <property type="protein sequence ID" value="AAA39502.1"/>
    <property type="status" value="JOINED"/>
    <property type="molecule type" value="Genomic_DNA"/>
</dbReference>
<dbReference type="EMBL" id="L00402">
    <property type="protein sequence ID" value="AAA39502.1"/>
    <property type="status" value="JOINED"/>
    <property type="molecule type" value="Genomic_DNA"/>
</dbReference>
<dbReference type="EMBL" id="L00403">
    <property type="protein sequence ID" value="AAA39502.1"/>
    <property type="status" value="JOINED"/>
    <property type="molecule type" value="Genomic_DNA"/>
</dbReference>
<dbReference type="EMBL" id="M15060">
    <property type="protein sequence ID" value="AAB59711.1"/>
    <property type="molecule type" value="mRNA"/>
</dbReference>
<dbReference type="EMBL" id="M15062">
    <property type="protein sequence ID" value="AAB59712.1"/>
    <property type="molecule type" value="mRNA"/>
</dbReference>
<dbReference type="EMBL" id="X67319">
    <property type="protein sequence ID" value="CAA47733.1"/>
    <property type="molecule type" value="mRNA"/>
</dbReference>
<dbReference type="EMBL" id="L07507">
    <property type="protein sequence ID" value="AAA37720.1"/>
    <property type="molecule type" value="mRNA"/>
</dbReference>
<dbReference type="EMBL" id="L07508">
    <property type="protein sequence ID" value="AAA37721.1"/>
    <property type="molecule type" value="mRNA"/>
</dbReference>
<dbReference type="EMBL" id="L07509">
    <property type="protein sequence ID" value="AAA37722.1"/>
    <property type="molecule type" value="mRNA"/>
</dbReference>
<dbReference type="EMBL" id="L07505">
    <property type="protein sequence ID" value="AAA37719.1"/>
    <property type="molecule type" value="Genomic_DNA"/>
</dbReference>
<dbReference type="EMBL" id="L07504">
    <property type="protein sequence ID" value="AAA37719.1"/>
    <property type="status" value="JOINED"/>
    <property type="molecule type" value="Genomic_DNA"/>
</dbReference>
<dbReference type="EMBL" id="AK005129">
    <property type="protein sequence ID" value="BAB23830.1"/>
    <property type="molecule type" value="mRNA"/>
</dbReference>
<dbReference type="EMBL" id="BC004704">
    <property type="protein sequence ID" value="AAH04704.1"/>
    <property type="molecule type" value="mRNA"/>
</dbReference>
<dbReference type="EMBL" id="M24410">
    <property type="protein sequence ID" value="AAA39498.1"/>
    <property type="molecule type" value="Genomic_DNA"/>
</dbReference>
<dbReference type="EMBL" id="M36275">
    <property type="protein sequence ID" value="AAA39504.1"/>
    <property type="molecule type" value="Genomic_DNA"/>
</dbReference>
<dbReference type="EMBL" id="K00989">
    <property type="protein sequence ID" value="AAA39495.1"/>
    <property type="molecule type" value="mRNA"/>
</dbReference>
<dbReference type="EMBL" id="M20010">
    <property type="protein sequence ID" value="AAA39503.1"/>
    <property type="molecule type" value="mRNA"/>
</dbReference>
<dbReference type="CCDS" id="CCDS29373.1">
    <molecule id="P04370-1"/>
</dbReference>
<dbReference type="CCDS" id="CCDS29374.1">
    <molecule id="P04370-2"/>
</dbReference>
<dbReference type="CCDS" id="CCDS29376.1">
    <molecule id="P04370-4"/>
</dbReference>
<dbReference type="CCDS" id="CCDS29377.1">
    <molecule id="P04370-5"/>
</dbReference>
<dbReference type="CCDS" id="CCDS29378.1">
    <molecule id="P04370-6"/>
</dbReference>
<dbReference type="CCDS" id="CCDS29379.1">
    <molecule id="P04370-7"/>
</dbReference>
<dbReference type="CCDS" id="CCDS37875.1">
    <molecule id="P04370-9"/>
</dbReference>
<dbReference type="CCDS" id="CCDS89290.1">
    <molecule id="P04370-8"/>
</dbReference>
<dbReference type="PIR" id="A45421">
    <property type="entry name" value="MBMSB"/>
</dbReference>
<dbReference type="RefSeq" id="NP_001020416.1">
    <molecule id="P04370-2"/>
    <property type="nucleotide sequence ID" value="NM_001025245.1"/>
</dbReference>
<dbReference type="RefSeq" id="NP_001020422.1">
    <molecule id="P04370-4"/>
    <property type="nucleotide sequence ID" value="NM_001025251.2"/>
</dbReference>
<dbReference type="RefSeq" id="NP_001020425.1">
    <molecule id="P04370-9"/>
    <property type="nucleotide sequence ID" value="NM_001025254.2"/>
</dbReference>
<dbReference type="RefSeq" id="NP_001020426.1">
    <molecule id="P04370-5"/>
    <property type="nucleotide sequence ID" value="NM_001025255.2"/>
</dbReference>
<dbReference type="RefSeq" id="NP_001020427.1">
    <molecule id="P04370-6"/>
    <property type="nucleotide sequence ID" value="NM_001025256.2"/>
</dbReference>
<dbReference type="RefSeq" id="NP_001020429.1">
    <molecule id="P04370-7"/>
    <property type="nucleotide sequence ID" value="NM_001025258.2"/>
</dbReference>
<dbReference type="RefSeq" id="NP_001020430.1">
    <molecule id="P04370-8"/>
    <property type="nucleotide sequence ID" value="NM_001025259.2"/>
</dbReference>
<dbReference type="RefSeq" id="NP_034907.1">
    <molecule id="P04370-1"/>
    <property type="nucleotide sequence ID" value="NM_010777.3"/>
</dbReference>
<dbReference type="PDB" id="1U3H">
    <property type="method" value="X-ray"/>
    <property type="resolution" value="2.42 A"/>
    <property type="chains" value="I/P=135-142"/>
</dbReference>
<dbReference type="PDB" id="2LUG">
    <property type="method" value="NMR"/>
    <property type="chains" value="A=206-237"/>
</dbReference>
<dbReference type="PDBsum" id="1U3H"/>
<dbReference type="PDBsum" id="2LUG"/>
<dbReference type="BMRB" id="P04370"/>
<dbReference type="SMR" id="P04370"/>
<dbReference type="BioGRID" id="201336">
    <property type="interactions" value="63"/>
</dbReference>
<dbReference type="FunCoup" id="P04370">
    <property type="interactions" value="307"/>
</dbReference>
<dbReference type="IntAct" id="P04370">
    <property type="interactions" value="30"/>
</dbReference>
<dbReference type="MINT" id="P04370"/>
<dbReference type="STRING" id="10090.ENSMUSP00000046185"/>
<dbReference type="ChEMBL" id="CHEMBL1764935"/>
<dbReference type="GlyGen" id="P04370">
    <property type="glycosylation" value="9 sites, 2 N-linked glycans (2 sites), 1 O-linked glycan (7 sites)"/>
</dbReference>
<dbReference type="iPTMnet" id="P04370"/>
<dbReference type="PhosphoSitePlus" id="P04370"/>
<dbReference type="SwissPalm" id="P04370"/>
<dbReference type="jPOST" id="P04370"/>
<dbReference type="PaxDb" id="10090-ENSMUSP00000046185"/>
<dbReference type="PeptideAtlas" id="P04370"/>
<dbReference type="ProteomicsDB" id="293422">
    <molecule id="P04370-1"/>
</dbReference>
<dbReference type="ProteomicsDB" id="293423">
    <molecule id="P04370-2"/>
</dbReference>
<dbReference type="ProteomicsDB" id="293424">
    <molecule id="P04370-3"/>
</dbReference>
<dbReference type="ProteomicsDB" id="293425">
    <molecule id="P04370-4"/>
</dbReference>
<dbReference type="ProteomicsDB" id="293426">
    <molecule id="P04370-5"/>
</dbReference>
<dbReference type="ProteomicsDB" id="293427">
    <molecule id="P04370-6"/>
</dbReference>
<dbReference type="ProteomicsDB" id="293428">
    <molecule id="P04370-7"/>
</dbReference>
<dbReference type="ProteomicsDB" id="293429">
    <molecule id="P04370-8"/>
</dbReference>
<dbReference type="ProteomicsDB" id="293430">
    <molecule id="P04370-9"/>
</dbReference>
<dbReference type="ProteomicsDB" id="293431">
    <molecule id="P04370-10"/>
</dbReference>
<dbReference type="ProteomicsDB" id="293432">
    <molecule id="P04370-11"/>
</dbReference>
<dbReference type="ProteomicsDB" id="293433">
    <molecule id="P04370-13"/>
</dbReference>
<dbReference type="ProteomicsDB" id="293434">
    <molecule id="P04370-14"/>
</dbReference>
<dbReference type="Antibodypedia" id="3704">
    <property type="antibodies" value="1422 antibodies from 50 providers"/>
</dbReference>
<dbReference type="DNASU" id="17196"/>
<dbReference type="Ensembl" id="ENSMUST00000047865.14">
    <molecule id="P04370-1"/>
    <property type="protein sequence ID" value="ENSMUSP00000046185.8"/>
    <property type="gene ID" value="ENSMUSG00000041607.18"/>
</dbReference>
<dbReference type="Ensembl" id="ENSMUST00000062446.15">
    <molecule id="P04370-11"/>
    <property type="protein sequence ID" value="ENSMUSP00000053495.9"/>
    <property type="gene ID" value="ENSMUSG00000041607.18"/>
</dbReference>
<dbReference type="Ensembl" id="ENSMUST00000075372.13">
    <molecule id="P04370-14"/>
    <property type="protein sequence ID" value="ENSMUSP00000074836.7"/>
    <property type="gene ID" value="ENSMUSG00000041607.18"/>
</dbReference>
<dbReference type="Ensembl" id="ENSMUST00000091789.11">
    <molecule id="P04370-2"/>
    <property type="protein sequence ID" value="ENSMUSP00000089393.5"/>
    <property type="gene ID" value="ENSMUSG00000041607.18"/>
</dbReference>
<dbReference type="Ensembl" id="ENSMUST00000102812.12">
    <molecule id="P04370-10"/>
    <property type="protein sequence ID" value="ENSMUSP00000099876.6"/>
    <property type="gene ID" value="ENSMUSG00000041607.18"/>
</dbReference>
<dbReference type="Ensembl" id="ENSMUST00000114674.11">
    <molecule id="P04370-13"/>
    <property type="protein sequence ID" value="ENSMUSP00000110322.5"/>
    <property type="gene ID" value="ENSMUSG00000041607.18"/>
</dbReference>
<dbReference type="Ensembl" id="ENSMUST00000123251.9">
    <molecule id="P04370-4"/>
    <property type="protein sequence ID" value="ENSMUSP00000121855.3"/>
    <property type="gene ID" value="ENSMUSG00000041607.18"/>
</dbReference>
<dbReference type="Ensembl" id="ENSMUST00000132369.3">
    <molecule id="P04370-7"/>
    <property type="protein sequence ID" value="ENSMUSP00000114230.3"/>
    <property type="gene ID" value="ENSMUSG00000041607.18"/>
</dbReference>
<dbReference type="Ensembl" id="ENSMUST00000133193.9">
    <molecule id="P04370-8"/>
    <property type="protein sequence ID" value="ENSMUSP00000116019.3"/>
    <property type="gene ID" value="ENSMUSG00000041607.18"/>
</dbReference>
<dbReference type="Ensembl" id="ENSMUST00000142850.9">
    <molecule id="P04370-5"/>
    <property type="protein sequence ID" value="ENSMUSP00000115082.3"/>
    <property type="gene ID" value="ENSMUSG00000041607.18"/>
</dbReference>
<dbReference type="Ensembl" id="ENSMUST00000143506.8">
    <molecule id="P04370-3"/>
    <property type="protein sequence ID" value="ENSMUSP00000138313.2"/>
    <property type="gene ID" value="ENSMUSG00000041607.18"/>
</dbReference>
<dbReference type="Ensembl" id="ENSMUST00000152071.9">
    <molecule id="P04370-6"/>
    <property type="protein sequence ID" value="ENSMUSP00000115409.3"/>
    <property type="gene ID" value="ENSMUSG00000041607.18"/>
</dbReference>
<dbReference type="Ensembl" id="ENSMUST00000153478.9">
    <molecule id="P04370-9"/>
    <property type="protein sequence ID" value="ENSMUSP00000114630.3"/>
    <property type="gene ID" value="ENSMUSG00000041607.18"/>
</dbReference>
<dbReference type="GeneID" id="17196"/>
<dbReference type="KEGG" id="mmu:17196"/>
<dbReference type="UCSC" id="uc008fts.1">
    <molecule id="P04370-1"/>
    <property type="organism name" value="mouse"/>
</dbReference>
<dbReference type="UCSC" id="uc008ftu.1">
    <molecule id="P04370-4"/>
    <property type="organism name" value="mouse"/>
</dbReference>
<dbReference type="UCSC" id="uc008ftv.1">
    <molecule id="P04370-9"/>
    <property type="organism name" value="mouse"/>
</dbReference>
<dbReference type="UCSC" id="uc008ftw.1">
    <molecule id="P04370-5"/>
    <property type="organism name" value="mouse"/>
</dbReference>
<dbReference type="UCSC" id="uc008fty.1">
    <molecule id="P04370-7"/>
    <property type="organism name" value="mouse"/>
</dbReference>
<dbReference type="UCSC" id="uc029tqh.1">
    <molecule id="P04370-14"/>
    <property type="organism name" value="mouse"/>
</dbReference>
<dbReference type="AGR" id="MGI:96925"/>
<dbReference type="CTD" id="4155"/>
<dbReference type="MGI" id="MGI:96925">
    <property type="gene designation" value="Mbp"/>
</dbReference>
<dbReference type="VEuPathDB" id="HostDB:ENSMUSG00000041607"/>
<dbReference type="eggNOG" id="ENOG502S4SJ">
    <property type="taxonomic scope" value="Eukaryota"/>
</dbReference>
<dbReference type="GeneTree" id="ENSGT00390000014772"/>
<dbReference type="HOGENOM" id="CLU_118634_0_0_1"/>
<dbReference type="InParanoid" id="P04370"/>
<dbReference type="OMA" id="FRTIGNQ"/>
<dbReference type="OrthoDB" id="8862162at2759"/>
<dbReference type="PhylomeDB" id="P04370"/>
<dbReference type="TreeFam" id="TF333391"/>
<dbReference type="BioGRID-ORCS" id="17196">
    <property type="hits" value="4 hits in 76 CRISPR screens"/>
</dbReference>
<dbReference type="CD-CODE" id="CE726F99">
    <property type="entry name" value="Postsynaptic density"/>
</dbReference>
<dbReference type="ChiTaRS" id="Mbp">
    <property type="organism name" value="mouse"/>
</dbReference>
<dbReference type="EvolutionaryTrace" id="P04370"/>
<dbReference type="PRO" id="PR:P04370"/>
<dbReference type="Proteomes" id="UP000000589">
    <property type="component" value="Chromosome 18"/>
</dbReference>
<dbReference type="RNAct" id="P04370">
    <property type="molecule type" value="protein"/>
</dbReference>
<dbReference type="Bgee" id="ENSMUSG00000041607">
    <property type="expression patterns" value="Expressed in globus pallidus and 267 other cell types or tissues"/>
</dbReference>
<dbReference type="ExpressionAtlas" id="P04370">
    <property type="expression patterns" value="baseline and differential"/>
</dbReference>
<dbReference type="GO" id="GO:0071944">
    <property type="term" value="C:cell periphery"/>
    <property type="evidence" value="ECO:0000314"/>
    <property type="project" value="MGI"/>
</dbReference>
<dbReference type="GO" id="GO:0042995">
    <property type="term" value="C:cell projection"/>
    <property type="evidence" value="ECO:0000314"/>
    <property type="project" value="MGI"/>
</dbReference>
<dbReference type="GO" id="GO:0043218">
    <property type="term" value="C:compact myelin"/>
    <property type="evidence" value="ECO:0000314"/>
    <property type="project" value="MGI"/>
</dbReference>
<dbReference type="GO" id="GO:0005737">
    <property type="term" value="C:cytoplasm"/>
    <property type="evidence" value="ECO:0007669"/>
    <property type="project" value="UniProtKB-SubCell"/>
</dbReference>
<dbReference type="GO" id="GO:0033269">
    <property type="term" value="C:internode region of axon"/>
    <property type="evidence" value="ECO:0000314"/>
    <property type="project" value="MGI"/>
</dbReference>
<dbReference type="GO" id="GO:0043209">
    <property type="term" value="C:myelin sheath"/>
    <property type="evidence" value="ECO:0000314"/>
    <property type="project" value="CAFA"/>
</dbReference>
<dbReference type="GO" id="GO:0043025">
    <property type="term" value="C:neuronal cell body"/>
    <property type="evidence" value="ECO:0000314"/>
    <property type="project" value="MGI"/>
</dbReference>
<dbReference type="GO" id="GO:0005634">
    <property type="term" value="C:nucleus"/>
    <property type="evidence" value="ECO:0007669"/>
    <property type="project" value="UniProtKB-SubCell"/>
</dbReference>
<dbReference type="GO" id="GO:0005886">
    <property type="term" value="C:plasma membrane"/>
    <property type="evidence" value="ECO:0007669"/>
    <property type="project" value="UniProtKB-KW"/>
</dbReference>
<dbReference type="GO" id="GO:0032991">
    <property type="term" value="C:protein-containing complex"/>
    <property type="evidence" value="ECO:0000314"/>
    <property type="project" value="CAFA"/>
</dbReference>
<dbReference type="GO" id="GO:0005516">
    <property type="term" value="F:calmodulin binding"/>
    <property type="evidence" value="ECO:0000353"/>
    <property type="project" value="CAFA"/>
</dbReference>
<dbReference type="GO" id="GO:0002020">
    <property type="term" value="F:protease binding"/>
    <property type="evidence" value="ECO:0000353"/>
    <property type="project" value="BHF-UCL"/>
</dbReference>
<dbReference type="GO" id="GO:0019911">
    <property type="term" value="F:structural constituent of myelin sheath"/>
    <property type="evidence" value="ECO:0007669"/>
    <property type="project" value="InterPro"/>
</dbReference>
<dbReference type="GO" id="GO:0035633">
    <property type="term" value="P:maintenance of blood-brain barrier"/>
    <property type="evidence" value="ECO:0007669"/>
    <property type="project" value="Ensembl"/>
</dbReference>
<dbReference type="GO" id="GO:0000165">
    <property type="term" value="P:MAPK cascade"/>
    <property type="evidence" value="ECO:0007669"/>
    <property type="project" value="Ensembl"/>
</dbReference>
<dbReference type="GO" id="GO:0061024">
    <property type="term" value="P:membrane organization"/>
    <property type="evidence" value="ECO:0000314"/>
    <property type="project" value="MGI"/>
</dbReference>
<dbReference type="GO" id="GO:0042552">
    <property type="term" value="P:myelination"/>
    <property type="evidence" value="ECO:0000314"/>
    <property type="project" value="MGI"/>
</dbReference>
<dbReference type="GO" id="GO:0034115">
    <property type="term" value="P:negative regulation of heterotypic cell-cell adhesion"/>
    <property type="evidence" value="ECO:0007669"/>
    <property type="project" value="Ensembl"/>
</dbReference>
<dbReference type="GO" id="GO:2000343">
    <property type="term" value="P:positive regulation of chemokine (C-X-C motif) ligand 2 production"/>
    <property type="evidence" value="ECO:0007669"/>
    <property type="project" value="Ensembl"/>
</dbReference>
<dbReference type="GO" id="GO:0032755">
    <property type="term" value="P:positive regulation of interleukin-6 production"/>
    <property type="evidence" value="ECO:0007669"/>
    <property type="project" value="Ensembl"/>
</dbReference>
<dbReference type="GO" id="GO:0009636">
    <property type="term" value="P:response to toxic substance"/>
    <property type="evidence" value="ECO:0000314"/>
    <property type="project" value="MGI"/>
</dbReference>
<dbReference type="GO" id="GO:0007605">
    <property type="term" value="P:sensory perception of sound"/>
    <property type="evidence" value="ECO:0000315"/>
    <property type="project" value="MGI"/>
</dbReference>
<dbReference type="DisProt" id="DP01101">
    <molecule id="P04370-5"/>
</dbReference>
<dbReference type="InterPro" id="IPR000548">
    <property type="entry name" value="Myelin_BP"/>
</dbReference>
<dbReference type="PANTHER" id="PTHR11429">
    <property type="entry name" value="MYELIN BASIC PROTEIN"/>
    <property type="match status" value="1"/>
</dbReference>
<dbReference type="PANTHER" id="PTHR11429:SF0">
    <property type="entry name" value="MYELIN BASIC PROTEIN"/>
    <property type="match status" value="1"/>
</dbReference>
<dbReference type="Pfam" id="PF01669">
    <property type="entry name" value="Myelin_MBP"/>
    <property type="match status" value="1"/>
</dbReference>
<dbReference type="PRINTS" id="PR00212">
    <property type="entry name" value="MYELINMBP"/>
</dbReference>
<dbReference type="PROSITE" id="PS00569">
    <property type="entry name" value="MYELIN_MBP"/>
    <property type="match status" value="1"/>
</dbReference>
<name>MBP_MOUSE</name>
<accession>P04370</accession>
<accession>Q01585</accession>
<accession>Q03139</accession>
<accession>Q03176</accession>
<accession>Q61836</accession>
<accession>Q61837</accession>
<accession>Q99KE4</accession>
<accession>Q9QWP1</accession>
<gene>
    <name type="primary">Mbp</name>
    <name type="synonym">Shi</name>
</gene>
<comment type="function">
    <text evidence="6">The classic group of MBP isoforms (isoform 4-isoform 13) are with PLP the most abundant protein components of the myelin membrane in the CNS. They have a role in both its formation and stabilization. The non-classic group of MBP isoforms (isoform 1-isoform 3/Golli-MBPs) may preferentially have a role in the early developing brain long before myelination, maybe as components of transcriptional complexes, and may also be involved in signaling pathways in T-cells and neural cells. Differential splicing events combined to optional post-translational modifications give a wide spectrum of isomers, with each of them potentially having a specialized function.</text>
</comment>
<comment type="subunit">
    <text evidence="1">Homodimer.</text>
</comment>
<comment type="subcellular location">
    <molecule>Isoform 13</molecule>
    <subcellularLocation>
        <location>Myelin membrane</location>
        <topology>Peripheral membrane protein</topology>
        <orientation>Cytoplasmic side</orientation>
    </subcellularLocation>
</comment>
<comment type="subcellular location">
    <molecule>Isoform 12</molecule>
    <subcellularLocation>
        <location>Myelin membrane</location>
        <topology>Peripheral membrane protein</topology>
        <orientation>Cytoplasmic side</orientation>
    </subcellularLocation>
</comment>
<comment type="subcellular location">
    <molecule>Isoform 11</molecule>
    <subcellularLocation>
        <location>Myelin membrane</location>
        <topology>Peripheral membrane protein</topology>
        <orientation>Cytoplasmic side</orientation>
    </subcellularLocation>
</comment>
<comment type="subcellular location">
    <molecule>Isoform 10</molecule>
    <subcellularLocation>
        <location>Myelin membrane</location>
        <topology>Peripheral membrane protein</topology>
        <orientation>Cytoplasmic side</orientation>
    </subcellularLocation>
</comment>
<comment type="subcellular location">
    <molecule>Isoform 9</molecule>
    <subcellularLocation>
        <location>Myelin membrane</location>
        <topology>Peripheral membrane protein</topology>
        <orientation>Cytoplasmic side</orientation>
    </subcellularLocation>
</comment>
<comment type="subcellular location">
    <molecule>Isoform 8</molecule>
    <subcellularLocation>
        <location>Myelin membrane</location>
        <topology>Peripheral membrane protein</topology>
        <orientation>Cytoplasmic side</orientation>
    </subcellularLocation>
</comment>
<comment type="subcellular location">
    <molecule>Isoform 7</molecule>
    <subcellularLocation>
        <location>Myelin membrane</location>
        <topology>Peripheral membrane protein</topology>
        <orientation>Cytoplasmic side</orientation>
    </subcellularLocation>
</comment>
<comment type="subcellular location">
    <molecule>Isoform 6</molecule>
    <subcellularLocation>
        <location>Myelin membrane</location>
        <topology>Peripheral membrane protein</topology>
        <orientation>Cytoplasmic side</orientation>
    </subcellularLocation>
</comment>
<comment type="subcellular location">
    <molecule>Isoform 5</molecule>
    <subcellularLocation>
        <location>Myelin membrane</location>
        <topology>Peripheral membrane protein</topology>
        <orientation>Cytoplasmic side</orientation>
    </subcellularLocation>
</comment>
<comment type="subcellular location">
    <molecule>Isoform 4</molecule>
    <subcellularLocation>
        <location>Myelin membrane</location>
        <topology>Peripheral membrane protein</topology>
        <orientation>Cytoplasmic side</orientation>
    </subcellularLocation>
</comment>
<comment type="subcellular location">
    <molecule>Isoform 3</molecule>
    <subcellularLocation>
        <location>Cytoplasm</location>
    </subcellularLocation>
    <subcellularLocation>
        <location>Nucleus</location>
    </subcellularLocation>
</comment>
<comment type="subcellular location">
    <molecule>Isoform 2</molecule>
    <subcellularLocation>
        <location>Cytoplasm</location>
    </subcellularLocation>
    <subcellularLocation>
        <location>Nucleus</location>
    </subcellularLocation>
</comment>
<comment type="subcellular location">
    <molecule>Isoform 1</molecule>
    <subcellularLocation>
        <location>Cytoplasm</location>
    </subcellularLocation>
    <subcellularLocation>
        <location>Nucleus</location>
    </subcellularLocation>
</comment>
<comment type="alternative products">
    <event type="alternative splicing"/>
    <isoform>
        <id>P04370-1</id>
        <name>1</name>
        <name>Golli-MBP1</name>
        <name>J37</name>
        <sequence type="displayed"/>
    </isoform>
    <isoform>
        <id>P04370-2</id>
        <name>2</name>
        <name>Golli-MBP2</name>
        <name>BG21</name>
        <name>HMBPR</name>
        <sequence type="described" ref="VSP_003314"/>
    </isoform>
    <isoform>
        <id>P04370-3</id>
        <name>3</name>
        <name>Golli-MBP3</name>
        <name>TP8</name>
        <sequence type="described" ref="VSP_003313"/>
    </isoform>
    <isoform>
        <id>P04370-4</id>
        <name>4</name>
        <name>21.5-kDa</name>
        <sequence type="described" ref="VSP_003312 VSP_003315 VSP_003319"/>
    </isoform>
    <isoform>
        <id>P04370-5</id>
        <name>5</name>
        <name>18.5-kDa</name>
        <sequence type="described" ref="VSP_003312 VSP_003319"/>
    </isoform>
    <isoform>
        <id>P04370-6</id>
        <name>6</name>
        <name>17-kDa-a</name>
        <sequence type="described" ref="VSP_003312 VSP_003315 VSP_003318"/>
    </isoform>
    <isoform>
        <id>P04370-7</id>
        <name>7</name>
        <name>17-kDa-b</name>
        <sequence type="described" ref="VSP_003312 VSP_003320"/>
    </isoform>
    <isoform>
        <id>P04370-8</id>
        <name>8</name>
        <name>14-kDa</name>
        <sequence type="described" ref="VSP_003312 VSP_003318"/>
    </isoform>
    <isoform>
        <id>P04370-9</id>
        <name>9</name>
        <sequence type="described" ref="VSP_003312 VSP_003315 VSP_003320"/>
    </isoform>
    <isoform>
        <id>P04370-10</id>
        <name>10</name>
        <name>21-kDa</name>
        <sequence type="described" ref="VSP_003312 VSP_003317"/>
    </isoform>
    <isoform>
        <id>P04370-11</id>
        <name>11</name>
        <name>19.7-kDa</name>
        <sequence type="described" ref="VSP_003312 VSP_003315 VSP_003316"/>
    </isoform>
    <isoform>
        <id>P04370-13</id>
        <name>12</name>
        <name>15.6-kDa</name>
        <sequence type="described" ref="VSP_003312 VSP_003315"/>
    </isoform>
    <isoform>
        <id>P04370-14</id>
        <name>13</name>
        <name>13-kDa</name>
        <sequence type="described" ref="VSP_003312"/>
    </isoform>
    <text>Additional isoforms seem to exist.</text>
</comment>
<comment type="tissue specificity">
    <text>In the embryo, isoform 1-isoform 3 are found in neurons within the central nervous system (primarily in pioneer neurons important in the formation of the cortex) and the peripheral nervous system. They are also expressed in the thymus, gut, lung and kidney. In the adult, isoform 1-isoform 3 are highly expressed in the brain (mainly in brain regions rich in oligodendrocytes) and spleen. Lower levels are seen in the heart, kidney and lung. Isoform 2 is also found in cells of the immune system. The isoforms missing the 134 first amino acids (isoform 4-isoform 13) are almost exclusively produced in the myelin-forming cells, the mature oligodendrocytes.</text>
</comment>
<comment type="developmental stage">
    <text evidence="7">The differential expression of MBP isoforms is developmentally regulated. Isoform 2 and isoform 3 are first expressed during embryonic stages (as early as at embryonic day 11.5), expression of isoform 1 is turned on shortly after birth. Expression of the isoforms missing the 134 first amino acids occurs later, presumably as the oligodendrocytes approach their terminally differentiated state.</text>
</comment>
<comment type="PTM">
    <text>As in other animals, several charge isomers may be produced as a result of optional post-translational modifications, such as phosphorylation of serine or threonine residues, deamidation of glutamine or asparagine residues, citrullination and methylation of arginine residues.</text>
</comment>
<comment type="PTM">
    <text>Methylated on arginine residues; decreases with the age of the animal, making MBP more cationic.</text>
</comment>
<comment type="PTM">
    <text evidence="1">Phosphorylated by TAOK2, VRK2, MAPK11, MAPK12, MAPK14 and MINK1.</text>
</comment>
<comment type="PTM">
    <text evidence="2">Proteolytically cleaved in B cell lysosomes by cathepsin CTSG which degrades the major immunogenic MBP epitope and prevents the activation of MBP-specific autoreactive T cells.</text>
</comment>
<comment type="disease">
    <text>Defects in Mbp are a cause of dysmyelinating diseases such as the shiverer (SHI) and myelin deficient (MLD) diseases characterized by decreased myelination in the CNS, tremors, and convulsions of progressively increasing severity leading to early death. The shiverer mice only express isoform 2, the MLD mice have a reduced amount of Mbp.</text>
</comment>
<comment type="similarity">
    <text evidence="14">Belongs to the myelin basic protein family.</text>
</comment>
<evidence type="ECO:0000250" key="1"/>
<evidence type="ECO:0000250" key="2">
    <source>
        <dbReference type="UniProtKB" id="P02686"/>
    </source>
</evidence>
<evidence type="ECO:0000250" key="3">
    <source>
        <dbReference type="UniProtKB" id="P02687"/>
    </source>
</evidence>
<evidence type="ECO:0000250" key="4">
    <source>
        <dbReference type="UniProtKB" id="P02688"/>
    </source>
</evidence>
<evidence type="ECO:0000256" key="5">
    <source>
        <dbReference type="SAM" id="MobiDB-lite"/>
    </source>
</evidence>
<evidence type="ECO:0000269" key="6">
    <source>
    </source>
</evidence>
<evidence type="ECO:0000269" key="7">
    <source>
    </source>
</evidence>
<evidence type="ECO:0000303" key="8">
    <source>
    </source>
</evidence>
<evidence type="ECO:0000303" key="9">
    <source>
    </source>
</evidence>
<evidence type="ECO:0000303" key="10">
    <source>
    </source>
</evidence>
<evidence type="ECO:0000303" key="11">
    <source>
    </source>
</evidence>
<evidence type="ECO:0000303" key="12">
    <source>
    </source>
</evidence>
<evidence type="ECO:0000303" key="13">
    <source>
    </source>
</evidence>
<evidence type="ECO:0000305" key="14"/>
<evidence type="ECO:0007744" key="15">
    <source>
    </source>
</evidence>
<evidence type="ECO:0007744" key="16">
    <source>
    </source>
</evidence>
<evidence type="ECO:0007744" key="17">
    <source>
    </source>
</evidence>
<evidence type="ECO:0007744" key="18">
    <source>
    </source>
</evidence>
<evidence type="ECO:0007744" key="19">
    <source>
    </source>
</evidence>
<evidence type="ECO:0007829" key="20">
    <source>
        <dbReference type="PDB" id="2LUG"/>
    </source>
</evidence>
<keyword id="KW-0002">3D-structure</keyword>
<keyword id="KW-0007">Acetylation</keyword>
<keyword id="KW-0025">Alternative splicing</keyword>
<keyword id="KW-0069">Autoimmune encephalomyelitis</keyword>
<keyword id="KW-1003">Cell membrane</keyword>
<keyword id="KW-0164">Citrullination</keyword>
<keyword id="KW-0963">Cytoplasm</keyword>
<keyword id="KW-0903">Direct protein sequencing</keyword>
<keyword id="KW-0472">Membrane</keyword>
<keyword id="KW-0488">Methylation</keyword>
<keyword id="KW-0539">Nucleus</keyword>
<keyword id="KW-0597">Phosphoprotein</keyword>
<keyword id="KW-1185">Reference proteome</keyword>
<organism>
    <name type="scientific">Mus musculus</name>
    <name type="common">Mouse</name>
    <dbReference type="NCBI Taxonomy" id="10090"/>
    <lineage>
        <taxon>Eukaryota</taxon>
        <taxon>Metazoa</taxon>
        <taxon>Chordata</taxon>
        <taxon>Craniata</taxon>
        <taxon>Vertebrata</taxon>
        <taxon>Euteleostomi</taxon>
        <taxon>Mammalia</taxon>
        <taxon>Eutheria</taxon>
        <taxon>Euarchontoglires</taxon>
        <taxon>Glires</taxon>
        <taxon>Rodentia</taxon>
        <taxon>Myomorpha</taxon>
        <taxon>Muroidea</taxon>
        <taxon>Muridae</taxon>
        <taxon>Murinae</taxon>
        <taxon>Mus</taxon>
        <taxon>Mus</taxon>
    </lineage>
</organism>
<reference key="1">
    <citation type="journal article" date="1985" name="Cell">
        <title>Cloning and characterization of the myelin basic protein gene from mouse: one gene can encode both 14 kd and 18.5 kd MBPs by alternate use of exons.</title>
        <authorList>
            <person name="Takahashi N."/>
            <person name="Roach A."/>
            <person name="Teplow D.B."/>
            <person name="Prusiner S.B."/>
            <person name="Hood L.E."/>
        </authorList>
    </citation>
    <scope>NUCLEOTIDE SEQUENCE [GENOMIC DNA]</scope>
</reference>
<reference key="2">
    <citation type="journal article" date="1985" name="Cell">
        <title>Alternative splicing accounts for the four forms of myelin basic protein.</title>
        <authorList>
            <person name="de Ferra F."/>
            <person name="Engh H."/>
            <person name="Hudson L."/>
            <person name="Kamholz J."/>
            <person name="Puckett C."/>
            <person name="Molineaux S."/>
            <person name="Lazzarini R.A."/>
        </authorList>
    </citation>
    <scope>NUCLEOTIDE SEQUENCE [GENOMIC DNA]</scope>
</reference>
<reference key="3">
    <citation type="journal article" date="1987" name="Proc. Natl. Acad. Sci. U.S.A.">
        <title>Identification of a cDNA coding for a fifth form of myelin basic protein in mouse.</title>
        <authorList>
            <person name="Newman S."/>
            <person name="Kitamura K."/>
            <person name="Campagnoni A.T."/>
        </authorList>
    </citation>
    <scope>NUCLEOTIDE SEQUENCE [MRNA] (ISOFORMS 6 AND 7)</scope>
    <scope>NUCLEOTIDE SEQUENCE [MRNA] OF 9-194</scope>
    <source>
        <strain>C57BL/6J</strain>
        <tissue>Brain</tissue>
    </source>
</reference>
<reference key="4">
    <citation type="journal article" date="1990" name="J. Neurochem.">
        <title>Expression of a novel transcript of the myelin basic protein gene.</title>
        <authorList>
            <person name="Kitamura K."/>
            <person name="Newman S.L."/>
            <person name="Campagnoni C.W."/>
            <person name="Verdi J.M."/>
            <person name="Mohandas T."/>
            <person name="Handley V.W."/>
            <person name="Campagnoni A.T."/>
        </authorList>
    </citation>
    <scope>NUCLEOTIDE SEQUENCE [MRNA] (ISOFORM 8)</scope>
</reference>
<reference key="5">
    <citation type="journal article" date="1992" name="J. Neurochem.">
        <title>A novel transcript overlapping the myelin basic protein gene.</title>
        <authorList>
            <person name="Grima B."/>
            <person name="Zelenika D."/>
            <person name="Pessac B."/>
        </authorList>
    </citation>
    <scope>NUCLEOTIDE SEQUENCE [MRNA] (ISOFORM 2)</scope>
    <source>
        <strain>C57BL/6J</strain>
        <tissue>Bone marrow</tissue>
    </source>
</reference>
<reference key="6">
    <citation type="journal article" date="1993" name="J. Biol. Chem.">
        <title>Structure and developmental regulation of Golli-mbp, a 105-kilobase gene that encompasses the myelin basic protein gene and is expressed in cells in the oligodendrocyte lineage in the brain.</title>
        <authorList>
            <person name="Campagnoni A.T."/>
            <person name="Pribyl T.M."/>
            <person name="Campagnoni C.W."/>
            <person name="Kampf K."/>
            <person name="Amur-Umarjee S."/>
            <person name="Landry C.F."/>
            <person name="Handley V.W."/>
            <person name="Newman S."/>
            <person name="Garbay B."/>
            <person name="Kitamura K."/>
        </authorList>
    </citation>
    <scope>NUCLEOTIDE SEQUENCE [GENOMIC DNA / MRNA] (ISOFORMS 1; 2 AND 3)</scope>
    <source>
        <strain>C57BL/6J</strain>
        <tissue>Brain</tissue>
    </source>
</reference>
<reference key="7">
    <citation type="journal article" date="2005" name="Science">
        <title>The transcriptional landscape of the mammalian genome.</title>
        <authorList>
            <person name="Carninci P."/>
            <person name="Kasukawa T."/>
            <person name="Katayama S."/>
            <person name="Gough J."/>
            <person name="Frith M.C."/>
            <person name="Maeda N."/>
            <person name="Oyama R."/>
            <person name="Ravasi T."/>
            <person name="Lenhard B."/>
            <person name="Wells C."/>
            <person name="Kodzius R."/>
            <person name="Shimokawa K."/>
            <person name="Bajic V.B."/>
            <person name="Brenner S.E."/>
            <person name="Batalov S."/>
            <person name="Forrest A.R."/>
            <person name="Zavolan M."/>
            <person name="Davis M.J."/>
            <person name="Wilming L.G."/>
            <person name="Aidinis V."/>
            <person name="Allen J.E."/>
            <person name="Ambesi-Impiombato A."/>
            <person name="Apweiler R."/>
            <person name="Aturaliya R.N."/>
            <person name="Bailey T.L."/>
            <person name="Bansal M."/>
            <person name="Baxter L."/>
            <person name="Beisel K.W."/>
            <person name="Bersano T."/>
            <person name="Bono H."/>
            <person name="Chalk A.M."/>
            <person name="Chiu K.P."/>
            <person name="Choudhary V."/>
            <person name="Christoffels A."/>
            <person name="Clutterbuck D.R."/>
            <person name="Crowe M.L."/>
            <person name="Dalla E."/>
            <person name="Dalrymple B.P."/>
            <person name="de Bono B."/>
            <person name="Della Gatta G."/>
            <person name="di Bernardo D."/>
            <person name="Down T."/>
            <person name="Engstrom P."/>
            <person name="Fagiolini M."/>
            <person name="Faulkner G."/>
            <person name="Fletcher C.F."/>
            <person name="Fukushima T."/>
            <person name="Furuno M."/>
            <person name="Futaki S."/>
            <person name="Gariboldi M."/>
            <person name="Georgii-Hemming P."/>
            <person name="Gingeras T.R."/>
            <person name="Gojobori T."/>
            <person name="Green R.E."/>
            <person name="Gustincich S."/>
            <person name="Harbers M."/>
            <person name="Hayashi Y."/>
            <person name="Hensch T.K."/>
            <person name="Hirokawa N."/>
            <person name="Hill D."/>
            <person name="Huminiecki L."/>
            <person name="Iacono M."/>
            <person name="Ikeo K."/>
            <person name="Iwama A."/>
            <person name="Ishikawa T."/>
            <person name="Jakt M."/>
            <person name="Kanapin A."/>
            <person name="Katoh M."/>
            <person name="Kawasawa Y."/>
            <person name="Kelso J."/>
            <person name="Kitamura H."/>
            <person name="Kitano H."/>
            <person name="Kollias G."/>
            <person name="Krishnan S.P."/>
            <person name="Kruger A."/>
            <person name="Kummerfeld S.K."/>
            <person name="Kurochkin I.V."/>
            <person name="Lareau L.F."/>
            <person name="Lazarevic D."/>
            <person name="Lipovich L."/>
            <person name="Liu J."/>
            <person name="Liuni S."/>
            <person name="McWilliam S."/>
            <person name="Madan Babu M."/>
            <person name="Madera M."/>
            <person name="Marchionni L."/>
            <person name="Matsuda H."/>
            <person name="Matsuzawa S."/>
            <person name="Miki H."/>
            <person name="Mignone F."/>
            <person name="Miyake S."/>
            <person name="Morris K."/>
            <person name="Mottagui-Tabar S."/>
            <person name="Mulder N."/>
            <person name="Nakano N."/>
            <person name="Nakauchi H."/>
            <person name="Ng P."/>
            <person name="Nilsson R."/>
            <person name="Nishiguchi S."/>
            <person name="Nishikawa S."/>
            <person name="Nori F."/>
            <person name="Ohara O."/>
            <person name="Okazaki Y."/>
            <person name="Orlando V."/>
            <person name="Pang K.C."/>
            <person name="Pavan W.J."/>
            <person name="Pavesi G."/>
            <person name="Pesole G."/>
            <person name="Petrovsky N."/>
            <person name="Piazza S."/>
            <person name="Reed J."/>
            <person name="Reid J.F."/>
            <person name="Ring B.Z."/>
            <person name="Ringwald M."/>
            <person name="Rost B."/>
            <person name="Ruan Y."/>
            <person name="Salzberg S.L."/>
            <person name="Sandelin A."/>
            <person name="Schneider C."/>
            <person name="Schoenbach C."/>
            <person name="Sekiguchi K."/>
            <person name="Semple C.A."/>
            <person name="Seno S."/>
            <person name="Sessa L."/>
            <person name="Sheng Y."/>
            <person name="Shibata Y."/>
            <person name="Shimada H."/>
            <person name="Shimada K."/>
            <person name="Silva D."/>
            <person name="Sinclair B."/>
            <person name="Sperling S."/>
            <person name="Stupka E."/>
            <person name="Sugiura K."/>
            <person name="Sultana R."/>
            <person name="Takenaka Y."/>
            <person name="Taki K."/>
            <person name="Tammoja K."/>
            <person name="Tan S.L."/>
            <person name="Tang S."/>
            <person name="Taylor M.S."/>
            <person name="Tegner J."/>
            <person name="Teichmann S.A."/>
            <person name="Ueda H.R."/>
            <person name="van Nimwegen E."/>
            <person name="Verardo R."/>
            <person name="Wei C.L."/>
            <person name="Yagi K."/>
            <person name="Yamanishi H."/>
            <person name="Zabarovsky E."/>
            <person name="Zhu S."/>
            <person name="Zimmer A."/>
            <person name="Hide W."/>
            <person name="Bult C."/>
            <person name="Grimmond S.M."/>
            <person name="Teasdale R.D."/>
            <person name="Liu E.T."/>
            <person name="Brusic V."/>
            <person name="Quackenbush J."/>
            <person name="Wahlestedt C."/>
            <person name="Mattick J.S."/>
            <person name="Hume D.A."/>
            <person name="Kai C."/>
            <person name="Sasaki D."/>
            <person name="Tomaru Y."/>
            <person name="Fukuda S."/>
            <person name="Kanamori-Katayama M."/>
            <person name="Suzuki M."/>
            <person name="Aoki J."/>
            <person name="Arakawa T."/>
            <person name="Iida J."/>
            <person name="Imamura K."/>
            <person name="Itoh M."/>
            <person name="Kato T."/>
            <person name="Kawaji H."/>
            <person name="Kawagashira N."/>
            <person name="Kawashima T."/>
            <person name="Kojima M."/>
            <person name="Kondo S."/>
            <person name="Konno H."/>
            <person name="Nakano K."/>
            <person name="Ninomiya N."/>
            <person name="Nishio T."/>
            <person name="Okada M."/>
            <person name="Plessy C."/>
            <person name="Shibata K."/>
            <person name="Shiraki T."/>
            <person name="Suzuki S."/>
            <person name="Tagami M."/>
            <person name="Waki K."/>
            <person name="Watahiki A."/>
            <person name="Okamura-Oho Y."/>
            <person name="Suzuki H."/>
            <person name="Kawai J."/>
            <person name="Hayashizaki Y."/>
        </authorList>
    </citation>
    <scope>NUCLEOTIDE SEQUENCE [LARGE SCALE MRNA] (ISOFORM 8)</scope>
    <source>
        <strain>C57BL/6J</strain>
        <tissue>Cerebellum</tissue>
    </source>
</reference>
<reference key="8">
    <citation type="journal article" date="2004" name="Genome Res.">
        <title>The status, quality, and expansion of the NIH full-length cDNA project: the Mammalian Gene Collection (MGC).</title>
        <authorList>
            <consortium name="The MGC Project Team"/>
        </authorList>
    </citation>
    <scope>NUCLEOTIDE SEQUENCE [LARGE SCALE MRNA] (ISOFORM 9)</scope>
    <source>
        <tissue>Mammary tumor</tissue>
    </source>
</reference>
<reference key="9">
    <citation type="journal article" date="1989" name="Gene">
        <title>The promoter elements of the mouse myelin basic protein gene function efficiently in NG108-15 neuronal/glial cells.</title>
        <authorList>
            <person name="Miura M."/>
            <person name="Tamura T.A."/>
            <person name="Aoyama A."/>
            <person name="Mikoshiba K."/>
        </authorList>
    </citation>
    <scope>NUCLEOTIDE SEQUENCE [GENOMIC DNA] OF 135-157</scope>
</reference>
<reference key="10">
    <citation type="submission" date="2007-04" db="UniProtKB">
        <authorList>
            <person name="Lubec G."/>
            <person name="Kang S.U."/>
        </authorList>
    </citation>
    <scope>PROTEIN SEQUENCE OF 146-157; 164-175; 196-205 AND 211-222</scope>
    <scope>IDENTIFICATION BY MASS SPECTROMETRY</scope>
    <source>
        <strain>C57BL/6J</strain>
        <tissue>Brain</tissue>
    </source>
</reference>
<reference key="11">
    <citation type="journal article" date="1988" name="EMBO J.">
        <title>Gene organization and transcription of duplicated MBP genes of myelin deficient (shi(mld)) mutant mouse.</title>
        <authorList>
            <person name="Okano H."/>
            <person name="Tamura T."/>
            <person name="Miura M."/>
            <person name="Aoyama A."/>
            <person name="Ikenaka K."/>
            <person name="Oshimura M."/>
            <person name="Mikoshiba K."/>
        </authorList>
    </citation>
    <scope>NUCLEOTIDE SEQUENCE [GENOMIC DNA] OF 191-224</scope>
</reference>
<reference key="12">
    <citation type="journal article" date="1984" name="Proc. Natl. Acad. Sci. U.S.A.">
        <title>Characterization of mouse myelin basic protein messenger RNAs with a myelin basic protein cDNA clone.</title>
        <authorList>
            <person name="Zeller N.K."/>
            <person name="Hunkeler M.J."/>
            <person name="Campagnoni A.T."/>
            <person name="Sprague J."/>
            <person name="Lazzarini R.A."/>
        </authorList>
    </citation>
    <scope>NUCLEOTIDE SEQUENCE [MRNA] OF 193-222</scope>
</reference>
<reference key="13">
    <citation type="journal article" date="1986" name="Proc. Natl. Acad. Sci. U.S.A.">
        <title>Identification of three forms of human myelin basic protein by cDNA cloning.</title>
        <authorList>
            <person name="Kamholz J."/>
            <person name="de Ferra F."/>
            <person name="Puckett C."/>
            <person name="Lazzarini R.A."/>
        </authorList>
    </citation>
    <scope>PARTIAL NUCLEOTIDE SEQUENCE [MRNA] (ISOFORMS 4; 6 AND 9)</scope>
</reference>
<reference key="14">
    <citation type="journal article" date="1991" name="J. Neurochem.">
        <title>Identification of the new isoforms of mouse myelin basic protein: the existence of exon 5a.</title>
        <authorList>
            <person name="Aruga J."/>
            <person name="Okano H."/>
            <person name="Mikoshiba K."/>
        </authorList>
    </citation>
    <scope>PARTIAL NUCLEOTIDE SEQUENCE [MRNA] (ISOFORMS 10 AND 11)</scope>
    <source>
        <tissue>Spinal cord</tissue>
    </source>
</reference>
<reference key="15">
    <citation type="journal article" date="1993" name="J. Neurochem.">
        <title>Novel isoforms of mouse myelin basic protein predominantly expressed in embryonic stage.</title>
        <authorList>
            <person name="Nakajima K."/>
            <person name="Ikenaka K."/>
            <person name="Kagawa T."/>
            <person name="Aruga J."/>
            <person name="Nakao J."/>
            <person name="Nakahira K."/>
            <person name="Shiota C."/>
            <person name="Kim S.U."/>
            <person name="Mikoshiba K."/>
        </authorList>
    </citation>
    <scope>PARTIAL NUCLEOTIDE SEQUENCE [MRNA] (ISOFORMS 12 AND 13)</scope>
    <source>
        <tissue>Embryonic brain</tissue>
    </source>
</reference>
<reference key="16">
    <citation type="journal article" date="1998" name="J. Neurosci.">
        <title>Embryonic expression of the myelin basic protein gene: identification of a promoter region that targets transgene expression to pioneer neurons.</title>
        <authorList>
            <person name="Landry C.F."/>
            <person name="Pribyl T.M."/>
            <person name="Ellison J.A."/>
            <person name="Givogri M.I."/>
            <person name="Kampf K."/>
            <person name="Campagnoni C.W."/>
            <person name="Campagnoni A.T."/>
        </authorList>
    </citation>
    <scope>DEVELOPMENTAL STAGE</scope>
</reference>
<reference key="17">
    <citation type="journal article" date="2001" name="Brain Pathol.">
        <title>The pathobiology of myelin mutants reveal novel biological functions of the MBP and PLP genes.</title>
        <authorList>
            <person name="Campagnoni A.T."/>
            <person name="Skoff R.P."/>
        </authorList>
    </citation>
    <scope>FUNCTION</scope>
</reference>
<reference key="18">
    <citation type="journal article" date="2005" name="Proteomics">
        <title>Quantitative analysis of both protein expression and serine / threonine post-translational modifications through stable isotope labeling with dithiothreitol.</title>
        <authorList>
            <person name="Vosseller K."/>
            <person name="Hansen K.C."/>
            <person name="Chalkley R.J."/>
            <person name="Trinidad J.C."/>
            <person name="Wells L."/>
            <person name="Hart G.W."/>
            <person name="Burlingame A.L."/>
        </authorList>
    </citation>
    <scope>PHOSPHORYLATION [LARGE SCALE ANALYSIS] AT SER-172</scope>
    <scope>IDENTIFICATION BY MASS SPECTROMETRY [LARGE SCALE ANALYSIS]</scope>
</reference>
<reference key="19">
    <citation type="journal article" date="2006" name="Mol. Cell. Proteomics">
        <title>Comprehensive identification of phosphorylation sites in postsynaptic density preparations.</title>
        <authorList>
            <person name="Trinidad J.C."/>
            <person name="Specht C.G."/>
            <person name="Thalhammer A."/>
            <person name="Schoepfer R."/>
            <person name="Burlingame A.L."/>
        </authorList>
    </citation>
    <scope>PHOSPHORYLATION [LARGE SCALE ANALYSIS] AT THR-167 AND THR-229</scope>
    <scope>PHOSPHORYLATION [LARGE SCALE ANALYSIS] AT SER-135 (ISOFORM 10)</scope>
    <scope>PHOSPHORYLATION [LARGE SCALE ANALYSIS] AT SER-139 (ISOFORM 4)</scope>
    <scope>PHOSPHORYLATION [LARGE SCALE ANALYSIS] AT THR-122 (ISOFORMS 4 AND 6)</scope>
    <scope>PHOSPHORYLATION [LARGE SCALE ANALYSIS] AT SER-113 (ISOFORM 5)</scope>
    <scope>PHOSPHORYLATION [LARGE SCALE ANALYSIS] AT THR-96 (ISOFORMS 5 AND 8)</scope>
    <scope>IDENTIFICATION BY MASS SPECTROMETRY [LARGE SCALE ANALYSIS]</scope>
    <source>
        <tissue>Brain</tissue>
    </source>
</reference>
<reference key="20">
    <citation type="journal article" date="2008" name="J. Proteome Res.">
        <title>Large-scale identification and evolution indexing of tyrosine phosphorylation sites from murine brain.</title>
        <authorList>
            <person name="Ballif B.A."/>
            <person name="Carey G.R."/>
            <person name="Sunyaev S.R."/>
            <person name="Gygi S.P."/>
        </authorList>
    </citation>
    <scope>PHOSPHORYLATION [LARGE SCALE ANALYSIS] AT TYR-199</scope>
    <scope>PHOSPHORYLATION [LARGE SCALE ANALYSIS] AT TYR-147 (ISOFORM 10)</scope>
    <scope>PHOSPHORYLATION [LARGE SCALE ANALYSIS] AT TYR-151 (ISOFORM 4)</scope>
    <scope>PHOSPHORYLATION [LARGE SCALE ANALYSIS] AT TYR-125 (ISOFORM 5)</scope>
    <scope>IDENTIFICATION BY MASS SPECTROMETRY [LARGE SCALE ANALYSIS]</scope>
    <source>
        <tissue>Brain</tissue>
    </source>
</reference>
<reference key="21">
    <citation type="journal article" date="2009" name="Immunity">
        <title>The phagosomal proteome in interferon-gamma-activated macrophages.</title>
        <authorList>
            <person name="Trost M."/>
            <person name="English L."/>
            <person name="Lemieux S."/>
            <person name="Courcelles M."/>
            <person name="Desjardins M."/>
            <person name="Thibault P."/>
        </authorList>
    </citation>
    <scope>IDENTIFICATION BY MASS SPECTROMETRY [LARGE SCALE ANALYSIS]</scope>
</reference>
<reference key="22">
    <citation type="journal article" date="2010" name="Cell">
        <title>A tissue-specific atlas of mouse protein phosphorylation and expression.</title>
        <authorList>
            <person name="Huttlin E.L."/>
            <person name="Jedrychowski M.P."/>
            <person name="Elias J.E."/>
            <person name="Goswami T."/>
            <person name="Rad R."/>
            <person name="Beausoleil S.A."/>
            <person name="Villen J."/>
            <person name="Haas W."/>
            <person name="Sowa M.E."/>
            <person name="Gygi S.P."/>
        </authorList>
    </citation>
    <scope>PHOSPHORYLATION [LARGE SCALE ANALYSIS] AT SER-31; SER-40; SER-144; SER-151; THR-167; SER-172; THR-197; SER-206; THR-211 AND THR-229</scope>
    <scope>IDENTIFICATION BY MASS SPECTROMETRY [LARGE SCALE ANALYSIS]</scope>
    <source>
        <tissue>Brain</tissue>
        <tissue>Brown adipose tissue</tissue>
        <tissue>Lung</tissue>
        <tissue>Spleen</tissue>
    </source>
</reference>
<reference key="23">
    <citation type="journal article" date="2014" name="Mol. Cell. Proteomics">
        <title>Immunoaffinity enrichment and mass spectrometry analysis of protein methylation.</title>
        <authorList>
            <person name="Guo A."/>
            <person name="Gu H."/>
            <person name="Zhou J."/>
            <person name="Mulhern D."/>
            <person name="Wang Y."/>
            <person name="Lee K.A."/>
            <person name="Yang V."/>
            <person name="Aguiar M."/>
            <person name="Kornhauser J."/>
            <person name="Jia X."/>
            <person name="Ren J."/>
            <person name="Beausoleil S.A."/>
            <person name="Silva J.C."/>
            <person name="Vemulapalli V."/>
            <person name="Bedford M.T."/>
            <person name="Comb M.J."/>
        </authorList>
    </citation>
    <scope>METHYLATION [LARGE SCALE ANALYSIS] AT ARG-175 AND ARG-181</scope>
    <scope>IDENTIFICATION BY MASS SPECTROMETRY [LARGE SCALE ANALYSIS]</scope>
    <source>
        <tissue>Brain</tissue>
    </source>
</reference>